<keyword id="KW-0963">Cytoplasm</keyword>
<keyword id="KW-0251">Elongation factor</keyword>
<keyword id="KW-0342">GTP-binding</keyword>
<keyword id="KW-0378">Hydrolase</keyword>
<keyword id="KW-0460">Magnesium</keyword>
<keyword id="KW-0479">Metal-binding</keyword>
<keyword id="KW-0547">Nucleotide-binding</keyword>
<keyword id="KW-0648">Protein biosynthesis</keyword>
<evidence type="ECO:0000250" key="1"/>
<evidence type="ECO:0000255" key="2">
    <source>
        <dbReference type="HAMAP-Rule" id="MF_00118"/>
    </source>
</evidence>
<sequence>MAKQKFDRSKPHCNVGTIGHVDHGKTTLTAAITKTLSTKGWADFRAYDQIDNAPEEKARGLTIAISHIEYQTETRHYAHIDCPGHADYIKNMITGAAQMDGAILVVSAPDGPMPQTREHVLLIHQVEVPAVVVALNKCDMMDDEELLELVELEVRELLTKNSFPGDEIPVVRVSAIKALECGCGKRECEWCGRIWKLMDAVDTYIPIPPRPVDKPFLMKVEDVFSIKGRGTVATGRVERGVIKGGDEVDLVGLHHEPRKIVVTSLEMFHKILDTAEPGDAVGLLLRGVEREDIERGMVLAKPGSIKPHVNAEAEVYVLSKDEGGRHTPFFNGYKPQFFFGTTDVTGEIHLPEGVEMVVPGDHVKMKISTIYPVAMEKGMRFAIREGGKTVGAGAISQVLA</sequence>
<proteinExistence type="inferred from homology"/>
<gene>
    <name evidence="2" type="primary">tuf</name>
    <name type="ordered locus">cbdbA960</name>
</gene>
<reference key="1">
    <citation type="journal article" date="2005" name="Nat. Biotechnol.">
        <title>Genome sequence of the chlorinated compound-respiring bacterium Dehalococcoides species strain CBDB1.</title>
        <authorList>
            <person name="Kube M."/>
            <person name="Beck A."/>
            <person name="Zinder S.H."/>
            <person name="Kuhl H."/>
            <person name="Reinhardt R."/>
            <person name="Adrian L."/>
        </authorList>
    </citation>
    <scope>NUCLEOTIDE SEQUENCE [LARGE SCALE GENOMIC DNA]</scope>
    <source>
        <strain>CBDB1</strain>
    </source>
</reference>
<dbReference type="EC" id="3.6.5.3" evidence="2"/>
<dbReference type="EMBL" id="AJ965256">
    <property type="protein sequence ID" value="CAI83087.1"/>
    <property type="molecule type" value="Genomic_DNA"/>
</dbReference>
<dbReference type="RefSeq" id="WP_011309438.1">
    <property type="nucleotide sequence ID" value="NC_007356.1"/>
</dbReference>
<dbReference type="SMR" id="Q3ZXX3"/>
<dbReference type="KEGG" id="deh:cbdbA960"/>
<dbReference type="HOGENOM" id="CLU_007265_0_1_0"/>
<dbReference type="Proteomes" id="UP000000433">
    <property type="component" value="Chromosome"/>
</dbReference>
<dbReference type="GO" id="GO:0005829">
    <property type="term" value="C:cytosol"/>
    <property type="evidence" value="ECO:0007669"/>
    <property type="project" value="TreeGrafter"/>
</dbReference>
<dbReference type="GO" id="GO:0005525">
    <property type="term" value="F:GTP binding"/>
    <property type="evidence" value="ECO:0007669"/>
    <property type="project" value="UniProtKB-UniRule"/>
</dbReference>
<dbReference type="GO" id="GO:0003924">
    <property type="term" value="F:GTPase activity"/>
    <property type="evidence" value="ECO:0007669"/>
    <property type="project" value="InterPro"/>
</dbReference>
<dbReference type="GO" id="GO:0003746">
    <property type="term" value="F:translation elongation factor activity"/>
    <property type="evidence" value="ECO:0007669"/>
    <property type="project" value="UniProtKB-UniRule"/>
</dbReference>
<dbReference type="CDD" id="cd01884">
    <property type="entry name" value="EF_Tu"/>
    <property type="match status" value="1"/>
</dbReference>
<dbReference type="CDD" id="cd03697">
    <property type="entry name" value="EFTU_II"/>
    <property type="match status" value="1"/>
</dbReference>
<dbReference type="CDD" id="cd03707">
    <property type="entry name" value="EFTU_III"/>
    <property type="match status" value="1"/>
</dbReference>
<dbReference type="FunFam" id="2.40.30.10:FF:000001">
    <property type="entry name" value="Elongation factor Tu"/>
    <property type="match status" value="1"/>
</dbReference>
<dbReference type="FunFam" id="3.40.50.300:FF:000003">
    <property type="entry name" value="Elongation factor Tu"/>
    <property type="match status" value="1"/>
</dbReference>
<dbReference type="Gene3D" id="3.40.50.300">
    <property type="entry name" value="P-loop containing nucleotide triphosphate hydrolases"/>
    <property type="match status" value="1"/>
</dbReference>
<dbReference type="Gene3D" id="2.40.30.10">
    <property type="entry name" value="Translation factors"/>
    <property type="match status" value="2"/>
</dbReference>
<dbReference type="HAMAP" id="MF_00118_B">
    <property type="entry name" value="EF_Tu_B"/>
    <property type="match status" value="1"/>
</dbReference>
<dbReference type="InterPro" id="IPR041709">
    <property type="entry name" value="EF-Tu_GTP-bd"/>
</dbReference>
<dbReference type="InterPro" id="IPR050055">
    <property type="entry name" value="EF-Tu_GTPase"/>
</dbReference>
<dbReference type="InterPro" id="IPR004161">
    <property type="entry name" value="EFTu-like_2"/>
</dbReference>
<dbReference type="InterPro" id="IPR033720">
    <property type="entry name" value="EFTU_2"/>
</dbReference>
<dbReference type="InterPro" id="IPR027417">
    <property type="entry name" value="P-loop_NTPase"/>
</dbReference>
<dbReference type="InterPro" id="IPR005225">
    <property type="entry name" value="Small_GTP-bd"/>
</dbReference>
<dbReference type="InterPro" id="IPR000795">
    <property type="entry name" value="T_Tr_GTP-bd_dom"/>
</dbReference>
<dbReference type="InterPro" id="IPR009000">
    <property type="entry name" value="Transl_B-barrel_sf"/>
</dbReference>
<dbReference type="InterPro" id="IPR009001">
    <property type="entry name" value="Transl_elong_EF1A/Init_IF2_C"/>
</dbReference>
<dbReference type="InterPro" id="IPR004541">
    <property type="entry name" value="Transl_elong_EFTu/EF1A_bac/org"/>
</dbReference>
<dbReference type="InterPro" id="IPR004160">
    <property type="entry name" value="Transl_elong_EFTu/EF1A_C"/>
</dbReference>
<dbReference type="NCBIfam" id="TIGR00485">
    <property type="entry name" value="EF-Tu"/>
    <property type="match status" value="1"/>
</dbReference>
<dbReference type="NCBIfam" id="NF000766">
    <property type="entry name" value="PRK00049.1"/>
    <property type="match status" value="1"/>
</dbReference>
<dbReference type="NCBIfam" id="NF009372">
    <property type="entry name" value="PRK12735.1"/>
    <property type="match status" value="1"/>
</dbReference>
<dbReference type="NCBIfam" id="NF009373">
    <property type="entry name" value="PRK12736.1"/>
    <property type="match status" value="1"/>
</dbReference>
<dbReference type="NCBIfam" id="TIGR00231">
    <property type="entry name" value="small_GTP"/>
    <property type="match status" value="1"/>
</dbReference>
<dbReference type="PANTHER" id="PTHR43721:SF22">
    <property type="entry name" value="ELONGATION FACTOR TU, MITOCHONDRIAL"/>
    <property type="match status" value="1"/>
</dbReference>
<dbReference type="PANTHER" id="PTHR43721">
    <property type="entry name" value="ELONGATION FACTOR TU-RELATED"/>
    <property type="match status" value="1"/>
</dbReference>
<dbReference type="Pfam" id="PF00009">
    <property type="entry name" value="GTP_EFTU"/>
    <property type="match status" value="1"/>
</dbReference>
<dbReference type="Pfam" id="PF03144">
    <property type="entry name" value="GTP_EFTU_D2"/>
    <property type="match status" value="1"/>
</dbReference>
<dbReference type="Pfam" id="PF03143">
    <property type="entry name" value="GTP_EFTU_D3"/>
    <property type="match status" value="1"/>
</dbReference>
<dbReference type="PRINTS" id="PR00315">
    <property type="entry name" value="ELONGATNFCT"/>
</dbReference>
<dbReference type="SUPFAM" id="SSF50465">
    <property type="entry name" value="EF-Tu/eEF-1alpha/eIF2-gamma C-terminal domain"/>
    <property type="match status" value="1"/>
</dbReference>
<dbReference type="SUPFAM" id="SSF52540">
    <property type="entry name" value="P-loop containing nucleoside triphosphate hydrolases"/>
    <property type="match status" value="1"/>
</dbReference>
<dbReference type="SUPFAM" id="SSF50447">
    <property type="entry name" value="Translation proteins"/>
    <property type="match status" value="1"/>
</dbReference>
<dbReference type="PROSITE" id="PS51722">
    <property type="entry name" value="G_TR_2"/>
    <property type="match status" value="1"/>
</dbReference>
<name>EFTU_DEHMC</name>
<accession>Q3ZXX3</accession>
<comment type="function">
    <text evidence="2">GTP hydrolase that promotes the GTP-dependent binding of aminoacyl-tRNA to the A-site of ribosomes during protein biosynthesis.</text>
</comment>
<comment type="catalytic activity">
    <reaction evidence="2">
        <text>GTP + H2O = GDP + phosphate + H(+)</text>
        <dbReference type="Rhea" id="RHEA:19669"/>
        <dbReference type="ChEBI" id="CHEBI:15377"/>
        <dbReference type="ChEBI" id="CHEBI:15378"/>
        <dbReference type="ChEBI" id="CHEBI:37565"/>
        <dbReference type="ChEBI" id="CHEBI:43474"/>
        <dbReference type="ChEBI" id="CHEBI:58189"/>
        <dbReference type="EC" id="3.6.5.3"/>
    </reaction>
    <physiologicalReaction direction="left-to-right" evidence="2">
        <dbReference type="Rhea" id="RHEA:19670"/>
    </physiologicalReaction>
</comment>
<comment type="subunit">
    <text evidence="2">Monomer.</text>
</comment>
<comment type="subcellular location">
    <subcellularLocation>
        <location evidence="2">Cytoplasm</location>
    </subcellularLocation>
</comment>
<comment type="similarity">
    <text evidence="2">Belongs to the TRAFAC class translation factor GTPase superfamily. Classic translation factor GTPase family. EF-Tu/EF-1A subfamily.</text>
</comment>
<protein>
    <recommendedName>
        <fullName evidence="2">Elongation factor Tu</fullName>
        <shortName evidence="2">EF-Tu</shortName>
        <ecNumber evidence="2">3.6.5.3</ecNumber>
    </recommendedName>
</protein>
<feature type="chain" id="PRO_1000015648" description="Elongation factor Tu">
    <location>
        <begin position="1"/>
        <end position="400"/>
    </location>
</feature>
<feature type="domain" description="tr-type G">
    <location>
        <begin position="10"/>
        <end position="210"/>
    </location>
</feature>
<feature type="region of interest" description="G1" evidence="1">
    <location>
        <begin position="19"/>
        <end position="26"/>
    </location>
</feature>
<feature type="region of interest" description="G2" evidence="1">
    <location>
        <begin position="60"/>
        <end position="64"/>
    </location>
</feature>
<feature type="region of interest" description="G3" evidence="1">
    <location>
        <begin position="81"/>
        <end position="84"/>
    </location>
</feature>
<feature type="region of interest" description="G4" evidence="1">
    <location>
        <begin position="136"/>
        <end position="139"/>
    </location>
</feature>
<feature type="region of interest" description="G5" evidence="1">
    <location>
        <begin position="174"/>
        <end position="176"/>
    </location>
</feature>
<feature type="binding site" evidence="2">
    <location>
        <begin position="19"/>
        <end position="26"/>
    </location>
    <ligand>
        <name>GTP</name>
        <dbReference type="ChEBI" id="CHEBI:37565"/>
    </ligand>
</feature>
<feature type="binding site" evidence="2">
    <location>
        <position position="26"/>
    </location>
    <ligand>
        <name>Mg(2+)</name>
        <dbReference type="ChEBI" id="CHEBI:18420"/>
    </ligand>
</feature>
<feature type="binding site" evidence="2">
    <location>
        <begin position="81"/>
        <end position="85"/>
    </location>
    <ligand>
        <name>GTP</name>
        <dbReference type="ChEBI" id="CHEBI:37565"/>
    </ligand>
</feature>
<feature type="binding site" evidence="2">
    <location>
        <begin position="136"/>
        <end position="139"/>
    </location>
    <ligand>
        <name>GTP</name>
        <dbReference type="ChEBI" id="CHEBI:37565"/>
    </ligand>
</feature>
<organism>
    <name type="scientific">Dehalococcoides mccartyi (strain CBDB1)</name>
    <dbReference type="NCBI Taxonomy" id="255470"/>
    <lineage>
        <taxon>Bacteria</taxon>
        <taxon>Bacillati</taxon>
        <taxon>Chloroflexota</taxon>
        <taxon>Dehalococcoidia</taxon>
        <taxon>Dehalococcoidales</taxon>
        <taxon>Dehalococcoidaceae</taxon>
        <taxon>Dehalococcoides</taxon>
    </lineage>
</organism>